<reference key="1">
    <citation type="journal article" date="2005" name="Nat. Biotechnol.">
        <title>Genome sequence of the chlorinated compound-respiring bacterium Dehalococcoides species strain CBDB1.</title>
        <authorList>
            <person name="Kube M."/>
            <person name="Beck A."/>
            <person name="Zinder S.H."/>
            <person name="Kuhl H."/>
            <person name="Reinhardt R."/>
            <person name="Adrian L."/>
        </authorList>
    </citation>
    <scope>NUCLEOTIDE SEQUENCE [LARGE SCALE GENOMIC DNA]</scope>
    <source>
        <strain>CBDB1</strain>
    </source>
</reference>
<dbReference type="EMBL" id="AJ965256">
    <property type="protein sequence ID" value="CAI83027.1"/>
    <property type="molecule type" value="Genomic_DNA"/>
</dbReference>
<dbReference type="RefSeq" id="WP_011309378.1">
    <property type="nucleotide sequence ID" value="NC_007356.1"/>
</dbReference>
<dbReference type="SMR" id="Q3ZXQ8"/>
<dbReference type="KEGG" id="deh:cbdbA890"/>
<dbReference type="HOGENOM" id="CLU_019250_2_2_0"/>
<dbReference type="UniPathway" id="UPA00148"/>
<dbReference type="Proteomes" id="UP000000433">
    <property type="component" value="Chromosome"/>
</dbReference>
<dbReference type="GO" id="GO:0015420">
    <property type="term" value="F:ABC-type vitamin B12 transporter activity"/>
    <property type="evidence" value="ECO:0007669"/>
    <property type="project" value="UniProtKB-UniRule"/>
</dbReference>
<dbReference type="GO" id="GO:0003824">
    <property type="term" value="F:catalytic activity"/>
    <property type="evidence" value="ECO:0007669"/>
    <property type="project" value="InterPro"/>
</dbReference>
<dbReference type="GO" id="GO:0009236">
    <property type="term" value="P:cobalamin biosynthetic process"/>
    <property type="evidence" value="ECO:0007669"/>
    <property type="project" value="UniProtKB-UniRule"/>
</dbReference>
<dbReference type="CDD" id="cd05389">
    <property type="entry name" value="CobQ_N"/>
    <property type="match status" value="1"/>
</dbReference>
<dbReference type="CDD" id="cd01750">
    <property type="entry name" value="GATase1_CobQ"/>
    <property type="match status" value="1"/>
</dbReference>
<dbReference type="Gene3D" id="3.40.50.880">
    <property type="match status" value="1"/>
</dbReference>
<dbReference type="Gene3D" id="3.40.50.300">
    <property type="entry name" value="P-loop containing nucleotide triphosphate hydrolases"/>
    <property type="match status" value="1"/>
</dbReference>
<dbReference type="HAMAP" id="MF_00028">
    <property type="entry name" value="CobQ"/>
    <property type="match status" value="1"/>
</dbReference>
<dbReference type="InterPro" id="IPR029062">
    <property type="entry name" value="Class_I_gatase-like"/>
</dbReference>
<dbReference type="InterPro" id="IPR002586">
    <property type="entry name" value="CobQ/CobB/MinD/ParA_Nub-bd_dom"/>
</dbReference>
<dbReference type="InterPro" id="IPR033949">
    <property type="entry name" value="CobQ_GATase1"/>
</dbReference>
<dbReference type="InterPro" id="IPR047045">
    <property type="entry name" value="CobQ_N"/>
</dbReference>
<dbReference type="InterPro" id="IPR004459">
    <property type="entry name" value="CobQ_synth"/>
</dbReference>
<dbReference type="InterPro" id="IPR011698">
    <property type="entry name" value="GATase_3"/>
</dbReference>
<dbReference type="InterPro" id="IPR027417">
    <property type="entry name" value="P-loop_NTPase"/>
</dbReference>
<dbReference type="NCBIfam" id="TIGR00313">
    <property type="entry name" value="cobQ"/>
    <property type="match status" value="1"/>
</dbReference>
<dbReference type="NCBIfam" id="NF001989">
    <property type="entry name" value="PRK00784.1"/>
    <property type="match status" value="1"/>
</dbReference>
<dbReference type="PANTHER" id="PTHR21343:SF1">
    <property type="entry name" value="COBYRIC ACID SYNTHASE"/>
    <property type="match status" value="1"/>
</dbReference>
<dbReference type="PANTHER" id="PTHR21343">
    <property type="entry name" value="DETHIOBIOTIN SYNTHETASE"/>
    <property type="match status" value="1"/>
</dbReference>
<dbReference type="Pfam" id="PF01656">
    <property type="entry name" value="CbiA"/>
    <property type="match status" value="1"/>
</dbReference>
<dbReference type="Pfam" id="PF07685">
    <property type="entry name" value="GATase_3"/>
    <property type="match status" value="1"/>
</dbReference>
<dbReference type="SUPFAM" id="SSF52317">
    <property type="entry name" value="Class I glutamine amidotransferase-like"/>
    <property type="match status" value="1"/>
</dbReference>
<dbReference type="SUPFAM" id="SSF52540">
    <property type="entry name" value="P-loop containing nucleoside triphosphate hydrolases"/>
    <property type="match status" value="1"/>
</dbReference>
<dbReference type="PROSITE" id="PS51274">
    <property type="entry name" value="GATASE_COBBQ"/>
    <property type="match status" value="1"/>
</dbReference>
<name>COBQ_DEHMC</name>
<organism>
    <name type="scientific">Dehalococcoides mccartyi (strain CBDB1)</name>
    <dbReference type="NCBI Taxonomy" id="255470"/>
    <lineage>
        <taxon>Bacteria</taxon>
        <taxon>Bacillati</taxon>
        <taxon>Chloroflexota</taxon>
        <taxon>Dehalococcoidia</taxon>
        <taxon>Dehalococcoidales</taxon>
        <taxon>Dehalococcoidaceae</taxon>
        <taxon>Dehalococcoides</taxon>
    </lineage>
</organism>
<gene>
    <name evidence="1" type="primary">cobQ</name>
    <name type="ordered locus">cbdbA890</name>
</gene>
<keyword id="KW-0169">Cobalamin biosynthesis</keyword>
<keyword id="KW-0315">Glutamine amidotransferase</keyword>
<comment type="function">
    <text evidence="1">Catalyzes amidations at positions B, D, E, and G on adenosylcobyrinic A,C-diamide. NH(2) groups are provided by glutamine, and one molecule of ATP is hydrogenolyzed for each amidation.</text>
</comment>
<comment type="pathway">
    <text evidence="1">Cofactor biosynthesis; adenosylcobalamin biosynthesis.</text>
</comment>
<comment type="similarity">
    <text evidence="1">Belongs to the CobB/CobQ family. CobQ subfamily.</text>
</comment>
<feature type="chain" id="PRO_1000002355" description="Cobyric acid synthase">
    <location>
        <begin position="1"/>
        <end position="503"/>
    </location>
</feature>
<feature type="domain" description="GATase cobBQ-type" evidence="1">
    <location>
        <begin position="251"/>
        <end position="450"/>
    </location>
</feature>
<feature type="active site" description="Nucleophile" evidence="1">
    <location>
        <position position="331"/>
    </location>
</feature>
<feature type="active site" evidence="1">
    <location>
        <position position="442"/>
    </location>
</feature>
<proteinExistence type="inferred from homology"/>
<evidence type="ECO:0000255" key="1">
    <source>
        <dbReference type="HAMAP-Rule" id="MF_00028"/>
    </source>
</evidence>
<sequence length="503" mass="54993">MAKLIMVQGTSSNVGKSILVTALCRIFKQDGYKVAPYKSQNMALNAFVTKEGGEIGRAQAVQAEACGIEPSVDMNPILLKPEADSRSQIIVNGKVDRTISAREYYEYAPLLLDTALAALNRLREKNDIVVIEGAGSPAEINLKQREIVNMRIAKEASAPVLLAGDIDRGGVFASLIGTIDLLEPDERYYIKGYLINKFRGDASLLKPAIDVLEDRTSIPVLGIIPYLRNMAIAQEDSVYLDECKGSLGETDLDIAVIRLPRISNYDDFDALATDGASVRFVSKTAEIGNPDLIIIPGTKSTIPDMEYLEQSGLAETIIKKARKGTHVLGVCGGYQILGKMIYDPHKTESETTELKGLGLLDTETTFEKEKATTQISGQVKFDSGLLSGLAGCAVSGYEIHMGRTRLFSAQPAFHITKTPKGPADYLDGASNAEGTVLGTYIHGIFENAAFRRGFLNAIRRHKGIPERQADYFDRDKEYDKLADIVRASIDMEKIYAILNEGIR</sequence>
<protein>
    <recommendedName>
        <fullName evidence="1">Cobyric acid synthase</fullName>
    </recommendedName>
</protein>
<accession>Q3ZXQ8</accession>